<comment type="function">
    <text evidence="1">Chaperone involved in the correct folding and assembly of outer membrane proteins. Recognizes specific patterns of aromatic residues and the orientation of their side chains, which are found more frequently in integral outer membrane proteins. May act in both early periplasmic and late outer membrane-associated steps of protein maturation.</text>
</comment>
<comment type="catalytic activity">
    <reaction evidence="1">
        <text>[protein]-peptidylproline (omega=180) = [protein]-peptidylproline (omega=0)</text>
        <dbReference type="Rhea" id="RHEA:16237"/>
        <dbReference type="Rhea" id="RHEA-COMP:10747"/>
        <dbReference type="Rhea" id="RHEA-COMP:10748"/>
        <dbReference type="ChEBI" id="CHEBI:83833"/>
        <dbReference type="ChEBI" id="CHEBI:83834"/>
        <dbReference type="EC" id="5.2.1.8"/>
    </reaction>
</comment>
<comment type="subcellular location">
    <subcellularLocation>
        <location evidence="1">Periplasm</location>
    </subcellularLocation>
    <text evidence="1">Is capable of associating with the outer membrane.</text>
</comment>
<comment type="domain">
    <text evidence="1">The PPIase activity resides only in the second parvulin domain. The N-terminal region and the C-terminal tail are necessary and sufficient for the chaperone activity of SurA. The PPIase activity is dispensable for SurA to function as a chaperone. The N-terminal region and the C-terminal tail are also required for porin recognition.</text>
</comment>
<comment type="sequence caution" evidence="2">
    <conflict type="erroneous initiation">
        <sequence resource="EMBL-CDS" id="AAN66034"/>
    </conflict>
</comment>
<sequence>MLGVALLSGAVHAAVQPLDRVVAIVDNDVVMQSQLDQRVHEVQQTIAKRGGGVPPTSALEQQVLERLIVENLQLQIGERSGIRITDEELNQAIGTIAQRNGMSLDQFRAALARDGLSFDDAREQVKREMIISRVRQRRVAERIQVSEQEVKNFLASDLGKMQMSEEYRLANILIPTPEAANSDDIQKAARKVGDVYQQLRQGADFGQMAIANSASENALEGGEMGWRKAGQLPPDFAKMLSSMPVGEITQPIRIPNGFIILKLEEKRGGSENVLRDEVHVRHILIKPSEIRSEAATEQLAERLYDRIKNGEDFGELAKSFSEDPGSALNGGDLNWVDPNSLVPEFREQMANAQQGVVTKPFKTQYGWHVLEVLGRRATDSTEQAREQQALSVLRNRKYDEELQTWLRQIRDEAYVEIKLPGADQAAQ</sequence>
<protein>
    <recommendedName>
        <fullName evidence="1">Chaperone SurA</fullName>
    </recommendedName>
    <alternativeName>
        <fullName evidence="1">Peptidyl-prolyl cis-trans isomerase SurA</fullName>
        <shortName evidence="1">PPIase SurA</shortName>
        <ecNumber evidence="1">5.2.1.8</ecNumber>
    </alternativeName>
    <alternativeName>
        <fullName evidence="1">Rotamase SurA</fullName>
    </alternativeName>
</protein>
<reference key="1">
    <citation type="journal article" date="2002" name="Environ. Microbiol.">
        <title>Complete genome sequence and comparative analysis of the metabolically versatile Pseudomonas putida KT2440.</title>
        <authorList>
            <person name="Nelson K.E."/>
            <person name="Weinel C."/>
            <person name="Paulsen I.T."/>
            <person name="Dodson R.J."/>
            <person name="Hilbert H."/>
            <person name="Martins dos Santos V.A.P."/>
            <person name="Fouts D.E."/>
            <person name="Gill S.R."/>
            <person name="Pop M."/>
            <person name="Holmes M."/>
            <person name="Brinkac L.M."/>
            <person name="Beanan M.J."/>
            <person name="DeBoy R.T."/>
            <person name="Daugherty S.C."/>
            <person name="Kolonay J.F."/>
            <person name="Madupu R."/>
            <person name="Nelson W.C."/>
            <person name="White O."/>
            <person name="Peterson J.D."/>
            <person name="Khouri H.M."/>
            <person name="Hance I."/>
            <person name="Chris Lee P."/>
            <person name="Holtzapple E.K."/>
            <person name="Scanlan D."/>
            <person name="Tran K."/>
            <person name="Moazzez A."/>
            <person name="Utterback T.R."/>
            <person name="Rizzo M."/>
            <person name="Lee K."/>
            <person name="Kosack D."/>
            <person name="Moestl D."/>
            <person name="Wedler H."/>
            <person name="Lauber J."/>
            <person name="Stjepandic D."/>
            <person name="Hoheisel J."/>
            <person name="Straetz M."/>
            <person name="Heim S."/>
            <person name="Kiewitz C."/>
            <person name="Eisen J.A."/>
            <person name="Timmis K.N."/>
            <person name="Duesterhoeft A."/>
            <person name="Tuemmler B."/>
            <person name="Fraser C.M."/>
        </authorList>
    </citation>
    <scope>NUCLEOTIDE SEQUENCE [LARGE SCALE GENOMIC DNA]</scope>
    <source>
        <strain>ATCC 47054 / DSM 6125 / CFBP 8728 / NCIMB 11950 / KT2440</strain>
    </source>
</reference>
<proteinExistence type="inferred from homology"/>
<accession>Q88QT4</accession>
<gene>
    <name evidence="1" type="primary">surA</name>
    <name type="ordered locus">PP_0403</name>
</gene>
<keyword id="KW-0143">Chaperone</keyword>
<keyword id="KW-0413">Isomerase</keyword>
<keyword id="KW-0574">Periplasm</keyword>
<keyword id="KW-1185">Reference proteome</keyword>
<keyword id="KW-0677">Repeat</keyword>
<keyword id="KW-0697">Rotamase</keyword>
<keyword id="KW-0732">Signal</keyword>
<feature type="signal peptide" evidence="1">
    <location>
        <begin position="1"/>
        <end position="13"/>
    </location>
</feature>
<feature type="chain" id="PRO_0000270029" description="Chaperone SurA">
    <location>
        <begin position="14"/>
        <end position="427"/>
    </location>
</feature>
<feature type="domain" description="PpiC 1" evidence="1">
    <location>
        <begin position="164"/>
        <end position="265"/>
    </location>
</feature>
<feature type="domain" description="PpiC 2" evidence="1">
    <location>
        <begin position="275"/>
        <end position="374"/>
    </location>
</feature>
<evidence type="ECO:0000255" key="1">
    <source>
        <dbReference type="HAMAP-Rule" id="MF_01183"/>
    </source>
</evidence>
<evidence type="ECO:0000305" key="2"/>
<dbReference type="EC" id="5.2.1.8" evidence="1"/>
<dbReference type="EMBL" id="AE015451">
    <property type="protein sequence ID" value="AAN66034.1"/>
    <property type="status" value="ALT_INIT"/>
    <property type="molecule type" value="Genomic_DNA"/>
</dbReference>
<dbReference type="RefSeq" id="NP_742570.1">
    <property type="nucleotide sequence ID" value="NC_002947.4"/>
</dbReference>
<dbReference type="SMR" id="Q88QT4"/>
<dbReference type="STRING" id="160488.PP_0403"/>
<dbReference type="PaxDb" id="160488-PP_0403"/>
<dbReference type="KEGG" id="ppu:PP_0403"/>
<dbReference type="PATRIC" id="fig|160488.4.peg.433"/>
<dbReference type="eggNOG" id="COG0760">
    <property type="taxonomic scope" value="Bacteria"/>
</dbReference>
<dbReference type="HOGENOM" id="CLU_034646_11_0_6"/>
<dbReference type="OrthoDB" id="14196at2"/>
<dbReference type="PhylomeDB" id="Q88QT4"/>
<dbReference type="Proteomes" id="UP000000556">
    <property type="component" value="Chromosome"/>
</dbReference>
<dbReference type="GO" id="GO:0030288">
    <property type="term" value="C:outer membrane-bounded periplasmic space"/>
    <property type="evidence" value="ECO:0007669"/>
    <property type="project" value="InterPro"/>
</dbReference>
<dbReference type="GO" id="GO:0042277">
    <property type="term" value="F:peptide binding"/>
    <property type="evidence" value="ECO:0007669"/>
    <property type="project" value="InterPro"/>
</dbReference>
<dbReference type="GO" id="GO:0003755">
    <property type="term" value="F:peptidyl-prolyl cis-trans isomerase activity"/>
    <property type="evidence" value="ECO:0007669"/>
    <property type="project" value="UniProtKB-UniRule"/>
</dbReference>
<dbReference type="GO" id="GO:0051082">
    <property type="term" value="F:unfolded protein binding"/>
    <property type="evidence" value="ECO:0007669"/>
    <property type="project" value="UniProtKB-UniRule"/>
</dbReference>
<dbReference type="GO" id="GO:0043165">
    <property type="term" value="P:Gram-negative-bacterium-type cell outer membrane assembly"/>
    <property type="evidence" value="ECO:0007669"/>
    <property type="project" value="InterPro"/>
</dbReference>
<dbReference type="GO" id="GO:0006457">
    <property type="term" value="P:protein folding"/>
    <property type="evidence" value="ECO:0007669"/>
    <property type="project" value="UniProtKB-UniRule"/>
</dbReference>
<dbReference type="GO" id="GO:0050821">
    <property type="term" value="P:protein stabilization"/>
    <property type="evidence" value="ECO:0007669"/>
    <property type="project" value="InterPro"/>
</dbReference>
<dbReference type="Gene3D" id="3.10.50.40">
    <property type="match status" value="2"/>
</dbReference>
<dbReference type="Gene3D" id="1.10.4030.10">
    <property type="entry name" value="Porin chaperone SurA, peptide-binding domain"/>
    <property type="match status" value="1"/>
</dbReference>
<dbReference type="HAMAP" id="MF_01183">
    <property type="entry name" value="Chaperone_SurA"/>
    <property type="match status" value="1"/>
</dbReference>
<dbReference type="InterPro" id="IPR050280">
    <property type="entry name" value="OMP_Chaperone_SurA"/>
</dbReference>
<dbReference type="InterPro" id="IPR046357">
    <property type="entry name" value="PPIase_dom_sf"/>
</dbReference>
<dbReference type="InterPro" id="IPR000297">
    <property type="entry name" value="PPIase_PpiC"/>
</dbReference>
<dbReference type="InterPro" id="IPR023034">
    <property type="entry name" value="PPIase_SurA"/>
</dbReference>
<dbReference type="InterPro" id="IPR015391">
    <property type="entry name" value="SurA_N"/>
</dbReference>
<dbReference type="InterPro" id="IPR027304">
    <property type="entry name" value="Trigger_fact/SurA_dom_sf"/>
</dbReference>
<dbReference type="NCBIfam" id="NF008038">
    <property type="entry name" value="PRK10770.1"/>
    <property type="match status" value="1"/>
</dbReference>
<dbReference type="PANTHER" id="PTHR47637">
    <property type="entry name" value="CHAPERONE SURA"/>
    <property type="match status" value="1"/>
</dbReference>
<dbReference type="PANTHER" id="PTHR47637:SF1">
    <property type="entry name" value="CHAPERONE SURA"/>
    <property type="match status" value="1"/>
</dbReference>
<dbReference type="Pfam" id="PF00639">
    <property type="entry name" value="Rotamase"/>
    <property type="match status" value="1"/>
</dbReference>
<dbReference type="Pfam" id="PF13616">
    <property type="entry name" value="Rotamase_3"/>
    <property type="match status" value="1"/>
</dbReference>
<dbReference type="Pfam" id="PF09312">
    <property type="entry name" value="SurA_N"/>
    <property type="match status" value="1"/>
</dbReference>
<dbReference type="SUPFAM" id="SSF54534">
    <property type="entry name" value="FKBP-like"/>
    <property type="match status" value="2"/>
</dbReference>
<dbReference type="SUPFAM" id="SSF109998">
    <property type="entry name" value="Triger factor/SurA peptide-binding domain-like"/>
    <property type="match status" value="1"/>
</dbReference>
<dbReference type="PROSITE" id="PS50198">
    <property type="entry name" value="PPIC_PPIASE_2"/>
    <property type="match status" value="2"/>
</dbReference>
<name>SURA_PSEPK</name>
<organism>
    <name type="scientific">Pseudomonas putida (strain ATCC 47054 / DSM 6125 / CFBP 8728 / NCIMB 11950 / KT2440)</name>
    <dbReference type="NCBI Taxonomy" id="160488"/>
    <lineage>
        <taxon>Bacteria</taxon>
        <taxon>Pseudomonadati</taxon>
        <taxon>Pseudomonadota</taxon>
        <taxon>Gammaproteobacteria</taxon>
        <taxon>Pseudomonadales</taxon>
        <taxon>Pseudomonadaceae</taxon>
        <taxon>Pseudomonas</taxon>
    </lineage>
</organism>